<proteinExistence type="evidence at protein level"/>
<evidence type="ECO:0000250" key="1">
    <source>
        <dbReference type="UniProtKB" id="P65556"/>
    </source>
</evidence>
<evidence type="ECO:0000255" key="2">
    <source>
        <dbReference type="PROSITE-ProRule" id="PRU00794"/>
    </source>
</evidence>
<evidence type="ECO:0000269" key="3">
    <source>
    </source>
</evidence>
<evidence type="ECO:0000303" key="4">
    <source>
    </source>
</evidence>
<evidence type="ECO:0000305" key="5"/>
<evidence type="ECO:0000305" key="6">
    <source>
    </source>
</evidence>
<evidence type="ECO:0000312" key="7">
    <source>
        <dbReference type="EMBL" id="AAM32278.1"/>
    </source>
</evidence>
<evidence type="ECO:0000312" key="8">
    <source>
        <dbReference type="Proteomes" id="UP000000595"/>
    </source>
</evidence>
<organism>
    <name type="scientific">Methanosarcina mazei (strain ATCC BAA-159 / DSM 3647 / Goe1 / Go1 / JCM 11833 / OCM 88)</name>
    <name type="common">Methanosarcina frisia</name>
    <dbReference type="NCBI Taxonomy" id="192952"/>
    <lineage>
        <taxon>Archaea</taxon>
        <taxon>Methanobacteriati</taxon>
        <taxon>Methanobacteriota</taxon>
        <taxon>Stenosarchaea group</taxon>
        <taxon>Methanomicrobia</taxon>
        <taxon>Methanosarcinales</taxon>
        <taxon>Methanosarcinaceae</taxon>
        <taxon>Methanosarcina</taxon>
    </lineage>
</organism>
<name>PRDPP_METMA</name>
<comment type="function">
    <text evidence="3">Hydrolyzes homoallylic isopentenyl diphosphate (IPP), its allylic isomer dimethylallyl diphosphate (DMAPP) and short-chain prenyl diphosphates geranyl diphosphate (GPP) and farnesyl diphosphate (FPP) to their corresponding monophosphate forms with high activity. The preferred substrate is IPP. ADP, NADPH, Ap5A and thiamine diphosphate (TPP) are weakly hydrolyzed. No hydrolysis with ATP, dNTPs, 8-OH-dGTP, NAD+, FAD or acetyl-CoA. The likely physiological role of this enzyme is to provide a substrate dimethylallyl phosphate (DMAP) for prenylated flavin mononucleotide (prenyl-FMN) synthase MM_1871 involved in the biosynthesis of prenyl-FMN, a coenzyme required in the archaea-specific mevalonate pathway.</text>
</comment>
<comment type="catalytic activity">
    <reaction evidence="3">
        <text>dimethylallyl diphosphate + H2O = dimethylallyl phosphate + phosphate + H(+)</text>
        <dbReference type="Rhea" id="RHEA:70507"/>
        <dbReference type="ChEBI" id="CHEBI:15377"/>
        <dbReference type="ChEBI" id="CHEBI:15378"/>
        <dbReference type="ChEBI" id="CHEBI:43474"/>
        <dbReference type="ChEBI" id="CHEBI:57623"/>
        <dbReference type="ChEBI" id="CHEBI:88052"/>
        <dbReference type="EC" id="3.6.1.76"/>
    </reaction>
</comment>
<comment type="catalytic activity">
    <reaction evidence="3">
        <text>isopentenyl diphosphate + H2O = isopentenyl phosphate + phosphate + H(+)</text>
        <dbReference type="Rhea" id="RHEA:70503"/>
        <dbReference type="ChEBI" id="CHEBI:15377"/>
        <dbReference type="ChEBI" id="CHEBI:15378"/>
        <dbReference type="ChEBI" id="CHEBI:43474"/>
        <dbReference type="ChEBI" id="CHEBI:65078"/>
        <dbReference type="ChEBI" id="CHEBI:128769"/>
        <dbReference type="EC" id="3.6.1.76"/>
    </reaction>
</comment>
<comment type="catalytic activity">
    <reaction evidence="3">
        <text>(2E,6E)-farnesyl diphosphate + H2O = (2E,6E)-farnesyl phosphate + phosphate + H(+)</text>
        <dbReference type="Rhea" id="RHEA:48128"/>
        <dbReference type="ChEBI" id="CHEBI:15377"/>
        <dbReference type="ChEBI" id="CHEBI:15378"/>
        <dbReference type="ChEBI" id="CHEBI:43474"/>
        <dbReference type="ChEBI" id="CHEBI:88226"/>
        <dbReference type="ChEBI" id="CHEBI:175763"/>
        <dbReference type="EC" id="3.6.1.76"/>
    </reaction>
</comment>
<comment type="catalytic activity">
    <reaction evidence="3">
        <text>(2E)-geranyl diphosphate + H2O = (2E)-geranyl phosphate + phosphate + H(+)</text>
        <dbReference type="Rhea" id="RHEA:47944"/>
        <dbReference type="ChEBI" id="CHEBI:15377"/>
        <dbReference type="ChEBI" id="CHEBI:15378"/>
        <dbReference type="ChEBI" id="CHEBI:43474"/>
        <dbReference type="ChEBI" id="CHEBI:58057"/>
        <dbReference type="ChEBI" id="CHEBI:88107"/>
        <dbReference type="EC" id="3.6.1.76"/>
    </reaction>
</comment>
<comment type="cofactor">
    <cofactor evidence="3">
        <name>Mg(2+)</name>
        <dbReference type="ChEBI" id="CHEBI:18420"/>
    </cofactor>
</comment>
<comment type="biophysicochemical properties">
    <kinetics>
        <KM evidence="3">19.5 uM for dimethylallyl diphosphate (DMAPP) (at pH 8.5 and 30 degrees Celsius)</KM>
        <KM evidence="3">27.8 uM for isopentenyl diphosphate (IPP) (at pH 8.5 and 30 degrees Celsius)</KM>
        <KM evidence="3">152 uM for geranyl diphosphate (GPP) (at pH 8.5 and 30 degrees Celsius)</KM>
        <KM evidence="3">99.8 uM for farnesyl diphosphate (FPP) (at pH 8.5 and 30 degrees Celsius)</KM>
        <text evidence="3">kcat is 0.139 sec(-1) with DMAPP as substrate. kcat is 0.681 sec(-1) with as IPP substrate. kcat is 0.395 sec(-1) with GPP as substrate. kcat is 0.298 sec(-1) with FPP as substrate.</text>
    </kinetics>
    <phDependence>
        <text evidence="3">Optimum pH is 8.5.</text>
    </phDependence>
    <temperatureDependence>
        <text evidence="3">Optimum temperature is 37 degrees Celsius. Stable at 30 degrees Celsius. More than half of its activity is lost after 30 minutes of treatment at 35 degrees Celsius. Activity is lost by 30 minutes of treatment above 40 degrees Celsius.</text>
    </temperatureDependence>
</comment>
<comment type="pathway">
    <text evidence="6">Isoprenoid biosynthesis.</text>
</comment>
<comment type="similarity">
    <text evidence="5">Belongs to the Nudix hydrolase family.</text>
</comment>
<dbReference type="EC" id="3.6.1.76" evidence="3"/>
<dbReference type="EMBL" id="AE008384">
    <property type="protein sequence ID" value="AAM32278.1"/>
    <property type="molecule type" value="Genomic_DNA"/>
</dbReference>
<dbReference type="RefSeq" id="WP_011034497.1">
    <property type="nucleotide sequence ID" value="NC_003901.1"/>
</dbReference>
<dbReference type="SMR" id="Q8PTX6"/>
<dbReference type="KEGG" id="mma:MM_2582"/>
<dbReference type="PATRIC" id="fig|192952.21.peg.2962"/>
<dbReference type="eggNOG" id="arCOG01082">
    <property type="taxonomic scope" value="Archaea"/>
</dbReference>
<dbReference type="HOGENOM" id="CLU_131901_0_0_2"/>
<dbReference type="BioCyc" id="MetaCyc:MONOMER-21849"/>
<dbReference type="Proteomes" id="UP000000595">
    <property type="component" value="Chromosome"/>
</dbReference>
<dbReference type="GO" id="GO:0016787">
    <property type="term" value="F:hydrolase activity"/>
    <property type="evidence" value="ECO:0007669"/>
    <property type="project" value="UniProtKB-KW"/>
</dbReference>
<dbReference type="GO" id="GO:0046872">
    <property type="term" value="F:metal ion binding"/>
    <property type="evidence" value="ECO:0007669"/>
    <property type="project" value="UniProtKB-KW"/>
</dbReference>
<dbReference type="GO" id="GO:0050993">
    <property type="term" value="P:dimethylallyl diphosphate metabolic process"/>
    <property type="evidence" value="ECO:0000314"/>
    <property type="project" value="UniProtKB"/>
</dbReference>
<dbReference type="GO" id="GO:0045339">
    <property type="term" value="P:farnesyl diphosphate catabolic process"/>
    <property type="evidence" value="ECO:0000314"/>
    <property type="project" value="UniProtKB"/>
</dbReference>
<dbReference type="GO" id="GO:0033383">
    <property type="term" value="P:geranyl diphosphate metabolic process"/>
    <property type="evidence" value="ECO:0000314"/>
    <property type="project" value="UniProtKB"/>
</dbReference>
<dbReference type="GO" id="GO:0046490">
    <property type="term" value="P:isopentenyl diphosphate metabolic process"/>
    <property type="evidence" value="ECO:0000314"/>
    <property type="project" value="UniProtKB"/>
</dbReference>
<dbReference type="Gene3D" id="3.90.79.10">
    <property type="entry name" value="Nucleoside Triphosphate Pyrophosphohydrolase"/>
    <property type="match status" value="1"/>
</dbReference>
<dbReference type="InterPro" id="IPR015797">
    <property type="entry name" value="NUDIX_hydrolase-like_dom_sf"/>
</dbReference>
<dbReference type="InterPro" id="IPR000086">
    <property type="entry name" value="NUDIX_hydrolase_dom"/>
</dbReference>
<dbReference type="InterPro" id="IPR048160">
    <property type="entry name" value="Prenyl-diphosphate_PPase"/>
</dbReference>
<dbReference type="NCBIfam" id="NF041653">
    <property type="entry name" value="Nud_hyd_Meth"/>
    <property type="match status" value="1"/>
</dbReference>
<dbReference type="Pfam" id="PF00293">
    <property type="entry name" value="NUDIX"/>
    <property type="match status" value="1"/>
</dbReference>
<dbReference type="SUPFAM" id="SSF55811">
    <property type="entry name" value="Nudix"/>
    <property type="match status" value="1"/>
</dbReference>
<dbReference type="PROSITE" id="PS51462">
    <property type="entry name" value="NUDIX"/>
    <property type="match status" value="1"/>
</dbReference>
<reference evidence="7 8" key="1">
    <citation type="journal article" date="2002" name="J. Mol. Microbiol. Biotechnol.">
        <title>The genome of Methanosarcina mazei: evidence for lateral gene transfer between Bacteria and Archaea.</title>
        <authorList>
            <person name="Deppenmeier U."/>
            <person name="Johann A."/>
            <person name="Hartsch T."/>
            <person name="Merkl R."/>
            <person name="Schmitz R.A."/>
            <person name="Martinez-Arias R."/>
            <person name="Henne A."/>
            <person name="Wiezer A."/>
            <person name="Baeumer S."/>
            <person name="Jacobi C."/>
            <person name="Brueggemann H."/>
            <person name="Lienard T."/>
            <person name="Christmann A."/>
            <person name="Boemecke M."/>
            <person name="Steckel S."/>
            <person name="Bhattacharyya A."/>
            <person name="Lykidis A."/>
            <person name="Overbeek R."/>
            <person name="Klenk H.-P."/>
            <person name="Gunsalus R.P."/>
            <person name="Fritz H.-J."/>
            <person name="Gottschalk G."/>
        </authorList>
    </citation>
    <scope>NUCLEOTIDE SEQUENCE [LARGE SCALE GENOMIC DNA]</scope>
    <source>
        <strain evidence="8">ATCC BAA-159 / DSM 3647 / Goe1 / Go1 / JCM 11833 / OCM 88</strain>
    </source>
</reference>
<reference key="2">
    <citation type="journal article" date="2022" name="Biosci. Biotechnol. Biochem.">
        <title>Isopentenyl diphosphate/dimethylallyl diphosphate-specific Nudix hydrolase from the methanogenic archaeon Methanosarcina mazei.</title>
        <authorList>
            <person name="Ishibashi Y."/>
            <person name="Matsushima N."/>
            <person name="Ito T."/>
            <person name="Hemmi H."/>
        </authorList>
    </citation>
    <scope>FUNCTION</scope>
    <scope>CATALYTIC ACTIVITY</scope>
    <scope>SUBSTRATE SPECIFICITY</scope>
    <scope>COFACTOR</scope>
    <scope>BIOPHYSICOCHEMICAL PROPERTIES</scope>
    <scope>PATHWAY</scope>
</reference>
<feature type="chain" id="PRO_0000455562" description="Prenyl-diphosphate phosphatase">
    <location>
        <begin position="1"/>
        <end position="170"/>
    </location>
</feature>
<feature type="domain" description="Nudix hydrolase" evidence="2">
    <location>
        <begin position="25"/>
        <end position="155"/>
    </location>
</feature>
<feature type="short sequence motif" description="Nudix box" evidence="2">
    <location>
        <begin position="59"/>
        <end position="83"/>
    </location>
</feature>
<feature type="binding site" evidence="1">
    <location>
        <position position="77"/>
    </location>
    <ligand>
        <name>Mg(2+)</name>
        <dbReference type="ChEBI" id="CHEBI:18420"/>
    </ligand>
</feature>
<feature type="binding site" evidence="1">
    <location>
        <position position="81"/>
    </location>
    <ligand>
        <name>Mg(2+)</name>
        <dbReference type="ChEBI" id="CHEBI:18420"/>
    </ligand>
</feature>
<gene>
    <name evidence="7" type="ordered locus">MM_2582</name>
</gene>
<accession>Q8PTX6</accession>
<sequence>MISEVDMDDNFLGLRARDEFYSGKHIHRASQLILLDPENRILLQKRSPGKFWFPNRYTYSVSGTVADESYEACIAREMLEEIGISVPFRRLFKIPCIRENKGAYHTIFSGRCSEEAASLIRHDLEEATSIEWVELEELHRAVKAEPGNYTPALREGIIKIFKEGCEKYLF</sequence>
<protein>
    <recommendedName>
        <fullName evidence="5">Prenyl-diphosphate phosphatase</fullName>
        <ecNumber evidence="3">3.6.1.76</ecNumber>
    </recommendedName>
    <alternativeName>
        <fullName evidence="4">Nudix hydrolase MM_2582</fullName>
    </alternativeName>
    <alternativeName>
        <fullName evidence="5">Prenyl-phosphatase</fullName>
    </alternativeName>
</protein>
<keyword id="KW-0378">Hydrolase</keyword>
<keyword id="KW-0460">Magnesium</keyword>
<keyword id="KW-0479">Metal-binding</keyword>